<feature type="chain" id="PRO_0000065890" description="Probable vacuolar protein sorting-associated protein 16 homolog">
    <location>
        <begin position="1"/>
        <end position="835"/>
    </location>
</feature>
<name>VPS16_SCHPO</name>
<organism>
    <name type="scientific">Schizosaccharomyces pombe (strain 972 / ATCC 24843)</name>
    <name type="common">Fission yeast</name>
    <dbReference type="NCBI Taxonomy" id="284812"/>
    <lineage>
        <taxon>Eukaryota</taxon>
        <taxon>Fungi</taxon>
        <taxon>Dikarya</taxon>
        <taxon>Ascomycota</taxon>
        <taxon>Taphrinomycotina</taxon>
        <taxon>Schizosaccharomycetes</taxon>
        <taxon>Schizosaccharomycetales</taxon>
        <taxon>Schizosaccharomycetaceae</taxon>
        <taxon>Schizosaccharomyces</taxon>
    </lineage>
</organism>
<evidence type="ECO:0000250" key="1"/>
<evidence type="ECO:0000305" key="2"/>
<comment type="function">
    <text evidence="1">Essential for vacuolar protein sorting. Required for vacuole biogenesis, stability and to maintain vacuole morphology (By similarity).</text>
</comment>
<comment type="similarity">
    <text evidence="2">Belongs to the VPS16 family.</text>
</comment>
<dbReference type="EMBL" id="CU329670">
    <property type="protein sequence ID" value="CAB57335.1"/>
    <property type="molecule type" value="Genomic_DNA"/>
</dbReference>
<dbReference type="PIR" id="T39106">
    <property type="entry name" value="T39106"/>
</dbReference>
<dbReference type="RefSeq" id="NP_593444.1">
    <property type="nucleotide sequence ID" value="NM_001018877.2"/>
</dbReference>
<dbReference type="SMR" id="Q9UT38"/>
<dbReference type="FunCoup" id="Q9UT38">
    <property type="interactions" value="862"/>
</dbReference>
<dbReference type="STRING" id="284812.Q9UT38"/>
<dbReference type="iPTMnet" id="Q9UT38"/>
<dbReference type="PaxDb" id="4896-SPAC824.05.1"/>
<dbReference type="EnsemblFungi" id="SPAC824.05.1">
    <property type="protein sequence ID" value="SPAC824.05.1:pep"/>
    <property type="gene ID" value="SPAC824.05"/>
</dbReference>
<dbReference type="GeneID" id="2541533"/>
<dbReference type="KEGG" id="spo:2541533"/>
<dbReference type="PomBase" id="SPAC824.05">
    <property type="gene designation" value="vps16"/>
</dbReference>
<dbReference type="VEuPathDB" id="FungiDB:SPAC824.05"/>
<dbReference type="eggNOG" id="KOG2280">
    <property type="taxonomic scope" value="Eukaryota"/>
</dbReference>
<dbReference type="HOGENOM" id="CLU_008909_1_0_1"/>
<dbReference type="InParanoid" id="Q9UT38"/>
<dbReference type="OMA" id="WCGDDCL"/>
<dbReference type="PhylomeDB" id="Q9UT38"/>
<dbReference type="PRO" id="PR:Q9UT38"/>
<dbReference type="Proteomes" id="UP000002485">
    <property type="component" value="Chromosome I"/>
</dbReference>
<dbReference type="GO" id="GO:0033263">
    <property type="term" value="C:CORVET complex"/>
    <property type="evidence" value="ECO:0000266"/>
    <property type="project" value="PomBase"/>
</dbReference>
<dbReference type="GO" id="GO:0005737">
    <property type="term" value="C:cytoplasm"/>
    <property type="evidence" value="ECO:0007005"/>
    <property type="project" value="PomBase"/>
</dbReference>
<dbReference type="GO" id="GO:0005829">
    <property type="term" value="C:cytosol"/>
    <property type="evidence" value="ECO:0007005"/>
    <property type="project" value="PomBase"/>
</dbReference>
<dbReference type="GO" id="GO:0005768">
    <property type="term" value="C:endosome"/>
    <property type="evidence" value="ECO:0000318"/>
    <property type="project" value="GO_Central"/>
</dbReference>
<dbReference type="GO" id="GO:0030897">
    <property type="term" value="C:HOPS complex"/>
    <property type="evidence" value="ECO:0000318"/>
    <property type="project" value="GO_Central"/>
</dbReference>
<dbReference type="GO" id="GO:0005634">
    <property type="term" value="C:nucleus"/>
    <property type="evidence" value="ECO:0007005"/>
    <property type="project" value="PomBase"/>
</dbReference>
<dbReference type="GO" id="GO:0003779">
    <property type="term" value="F:actin binding"/>
    <property type="evidence" value="ECO:0000318"/>
    <property type="project" value="GO_Central"/>
</dbReference>
<dbReference type="GO" id="GO:0016197">
    <property type="term" value="P:endosomal transport"/>
    <property type="evidence" value="ECO:0000318"/>
    <property type="project" value="GO_Central"/>
</dbReference>
<dbReference type="GO" id="GO:0006895">
    <property type="term" value="P:Golgi to endosome transport"/>
    <property type="evidence" value="ECO:0000250"/>
    <property type="project" value="PomBase"/>
</dbReference>
<dbReference type="GO" id="GO:0006886">
    <property type="term" value="P:intracellular protein transport"/>
    <property type="evidence" value="ECO:0007669"/>
    <property type="project" value="InterPro"/>
</dbReference>
<dbReference type="GO" id="GO:0045324">
    <property type="term" value="P:late endosome to vacuole transport"/>
    <property type="evidence" value="ECO:0000250"/>
    <property type="project" value="PomBase"/>
</dbReference>
<dbReference type="GO" id="GO:0042144">
    <property type="term" value="P:vacuole fusion, non-autophagic"/>
    <property type="evidence" value="ECO:0000318"/>
    <property type="project" value="GO_Central"/>
</dbReference>
<dbReference type="GO" id="GO:0048278">
    <property type="term" value="P:vesicle docking"/>
    <property type="evidence" value="ECO:0000250"/>
    <property type="project" value="PomBase"/>
</dbReference>
<dbReference type="FunFam" id="1.10.150.780:FF:000001">
    <property type="entry name" value="Vacuolar protein sorting-associated protein 16 homolog"/>
    <property type="match status" value="1"/>
</dbReference>
<dbReference type="Gene3D" id="1.10.150.780">
    <property type="entry name" value="Vps16, C-terminal region"/>
    <property type="match status" value="1"/>
</dbReference>
<dbReference type="InterPro" id="IPR016534">
    <property type="entry name" value="VPS16"/>
</dbReference>
<dbReference type="InterPro" id="IPR006925">
    <property type="entry name" value="Vps16_C"/>
</dbReference>
<dbReference type="InterPro" id="IPR038132">
    <property type="entry name" value="Vps16_C_sf"/>
</dbReference>
<dbReference type="InterPro" id="IPR006926">
    <property type="entry name" value="Vps16_N"/>
</dbReference>
<dbReference type="InterPro" id="IPR036322">
    <property type="entry name" value="WD40_repeat_dom_sf"/>
</dbReference>
<dbReference type="PANTHER" id="PTHR12811">
    <property type="entry name" value="VACUOLAR PROTEIN SORTING VPS16"/>
    <property type="match status" value="1"/>
</dbReference>
<dbReference type="PANTHER" id="PTHR12811:SF0">
    <property type="entry name" value="VACUOLAR PROTEIN SORTING-ASSOCIATED PROTEIN 16 HOMOLOG"/>
    <property type="match status" value="1"/>
</dbReference>
<dbReference type="Pfam" id="PF04840">
    <property type="entry name" value="Vps16_C"/>
    <property type="match status" value="1"/>
</dbReference>
<dbReference type="Pfam" id="PF04841">
    <property type="entry name" value="Vps16_N"/>
    <property type="match status" value="1"/>
</dbReference>
<dbReference type="PIRSF" id="PIRSF007949">
    <property type="entry name" value="VPS16"/>
    <property type="match status" value="1"/>
</dbReference>
<dbReference type="SUPFAM" id="SSF50978">
    <property type="entry name" value="WD40 repeat-like"/>
    <property type="match status" value="1"/>
</dbReference>
<reference key="1">
    <citation type="journal article" date="2002" name="Nature">
        <title>The genome sequence of Schizosaccharomyces pombe.</title>
        <authorList>
            <person name="Wood V."/>
            <person name="Gwilliam R."/>
            <person name="Rajandream M.A."/>
            <person name="Lyne M.H."/>
            <person name="Lyne R."/>
            <person name="Stewart A."/>
            <person name="Sgouros J.G."/>
            <person name="Peat N."/>
            <person name="Hayles J."/>
            <person name="Baker S.G."/>
            <person name="Basham D."/>
            <person name="Bowman S."/>
            <person name="Brooks K."/>
            <person name="Brown D."/>
            <person name="Brown S."/>
            <person name="Chillingworth T."/>
            <person name="Churcher C.M."/>
            <person name="Collins M."/>
            <person name="Connor R."/>
            <person name="Cronin A."/>
            <person name="Davis P."/>
            <person name="Feltwell T."/>
            <person name="Fraser A."/>
            <person name="Gentles S."/>
            <person name="Goble A."/>
            <person name="Hamlin N."/>
            <person name="Harris D.E."/>
            <person name="Hidalgo J."/>
            <person name="Hodgson G."/>
            <person name="Holroyd S."/>
            <person name="Hornsby T."/>
            <person name="Howarth S."/>
            <person name="Huckle E.J."/>
            <person name="Hunt S."/>
            <person name="Jagels K."/>
            <person name="James K.D."/>
            <person name="Jones L."/>
            <person name="Jones M."/>
            <person name="Leather S."/>
            <person name="McDonald S."/>
            <person name="McLean J."/>
            <person name="Mooney P."/>
            <person name="Moule S."/>
            <person name="Mungall K.L."/>
            <person name="Murphy L.D."/>
            <person name="Niblett D."/>
            <person name="Odell C."/>
            <person name="Oliver K."/>
            <person name="O'Neil S."/>
            <person name="Pearson D."/>
            <person name="Quail M.A."/>
            <person name="Rabbinowitsch E."/>
            <person name="Rutherford K.M."/>
            <person name="Rutter S."/>
            <person name="Saunders D."/>
            <person name="Seeger K."/>
            <person name="Sharp S."/>
            <person name="Skelton J."/>
            <person name="Simmonds M.N."/>
            <person name="Squares R."/>
            <person name="Squares S."/>
            <person name="Stevens K."/>
            <person name="Taylor K."/>
            <person name="Taylor R.G."/>
            <person name="Tivey A."/>
            <person name="Walsh S.V."/>
            <person name="Warren T."/>
            <person name="Whitehead S."/>
            <person name="Woodward J.R."/>
            <person name="Volckaert G."/>
            <person name="Aert R."/>
            <person name="Robben J."/>
            <person name="Grymonprez B."/>
            <person name="Weltjens I."/>
            <person name="Vanstreels E."/>
            <person name="Rieger M."/>
            <person name="Schaefer M."/>
            <person name="Mueller-Auer S."/>
            <person name="Gabel C."/>
            <person name="Fuchs M."/>
            <person name="Duesterhoeft A."/>
            <person name="Fritzc C."/>
            <person name="Holzer E."/>
            <person name="Moestl D."/>
            <person name="Hilbert H."/>
            <person name="Borzym K."/>
            <person name="Langer I."/>
            <person name="Beck A."/>
            <person name="Lehrach H."/>
            <person name="Reinhardt R."/>
            <person name="Pohl T.M."/>
            <person name="Eger P."/>
            <person name="Zimmermann W."/>
            <person name="Wedler H."/>
            <person name="Wambutt R."/>
            <person name="Purnelle B."/>
            <person name="Goffeau A."/>
            <person name="Cadieu E."/>
            <person name="Dreano S."/>
            <person name="Gloux S."/>
            <person name="Lelaure V."/>
            <person name="Mottier S."/>
            <person name="Galibert F."/>
            <person name="Aves S.J."/>
            <person name="Xiang Z."/>
            <person name="Hunt C."/>
            <person name="Moore K."/>
            <person name="Hurst S.M."/>
            <person name="Lucas M."/>
            <person name="Rochet M."/>
            <person name="Gaillardin C."/>
            <person name="Tallada V.A."/>
            <person name="Garzon A."/>
            <person name="Thode G."/>
            <person name="Daga R.R."/>
            <person name="Cruzado L."/>
            <person name="Jimenez J."/>
            <person name="Sanchez M."/>
            <person name="del Rey F."/>
            <person name="Benito J."/>
            <person name="Dominguez A."/>
            <person name="Revuelta J.L."/>
            <person name="Moreno S."/>
            <person name="Armstrong J."/>
            <person name="Forsburg S.L."/>
            <person name="Cerutti L."/>
            <person name="Lowe T."/>
            <person name="McCombie W.R."/>
            <person name="Paulsen I."/>
            <person name="Potashkin J."/>
            <person name="Shpakovski G.V."/>
            <person name="Ussery D."/>
            <person name="Barrell B.G."/>
            <person name="Nurse P."/>
        </authorList>
    </citation>
    <scope>NUCLEOTIDE SEQUENCE [LARGE SCALE GENOMIC DNA]</scope>
    <source>
        <strain>972 / ATCC 24843</strain>
    </source>
</reference>
<proteinExistence type="inferred from homology"/>
<keyword id="KW-0653">Protein transport</keyword>
<keyword id="KW-1185">Reference proteome</keyword>
<keyword id="KW-0813">Transport</keyword>
<accession>Q9UT38</accession>
<gene>
    <name type="primary">vps16</name>
    <name type="ORF">SPAC824.05</name>
</gene>
<protein>
    <recommendedName>
        <fullName>Probable vacuolar protein sorting-associated protein 16 homolog</fullName>
    </recommendedName>
</protein>
<sequence>MEPSIKYPIYEWELLQDTYYQKSAIGKAEWEYIDPVDFMFAVAPCGGAIAITRSESNLQSNYKYDQVPMYSICVFCLSGQLLQTLTWDKTSLVGMGWNENEELIVVSKQGQVRVYNLLGEFHQFSLGKGVENIGIRECQFSEGGVFALLQNDTFISITGFEEPWRKTYASIPFNTLEYYNIDSWALIPNPFSPDLGMDIVVTVGPHILQIDEQDSQLHSISSLQHVSHISISPNARYLALYESVGKVRVISSDFSKELLDLRLPETVAEASLKQMAWCGNDAVVLVHENLLTLVGPFGGSVPYLYNHTPIVSTEVDGVRILTKDSSEFLRKVPAPLENIFHIGSKTPGAKLVEAFQKMKLKSVFAEKMLLELKDELHDAVDTCVQASLNEFSIEWQKVLLEAASLGKNSLRMYNHQEYVDVCRELRVLNAARDPNVGIYITHEEYLHLGLERLIQRFSCRQLYGLAVQASMWMQIPCDWVYIQWAQTYIKQSSEPEEVVLDNIVKRLSSRKYISYEKIARTAYQEGRLILSTKLLDFEPLAKHQVMLLLNMEAYEQALKKVIETMDNNLIIYVVLQIKQQMAIASFFQILNEYPDAVKVYVEFAKKNDRKTLHDFFYQDDNKQGIAVLAVEDTLKTATVNQRITSLKSAAKVCSESKELSLEEKCLGDEIKLLQLQQTYEDQFTGNFVGLTVNEVVVKLIQINQTQRANKLRSDFQIPEKRFAWLKLRALVAIRDWVQIEQWAGSMRRSPIGFEPFVTEILSAGNKKEAAKYIPRCTQLTTQEKVDMWVQVGDVKSASEEAAKSKSGSVLGDLLERVQTMPESRFVQNALDQLRR</sequence>